<name>AT5G3_RAT</name>
<reference key="1">
    <citation type="journal article" date="2001" name="Physiol. Genomics">
        <title>Rat mitochondrial ATP synthase ATP5G3: cloning and upregulation in pancreas after chronic ethanol feeding.</title>
        <authorList>
            <person name="Li H.S."/>
            <person name="Zhang J.Y."/>
            <person name="Thompson B.S."/>
            <person name="Deng X.Y."/>
            <person name="Ford M.E."/>
            <person name="Wood P.G."/>
            <person name="Stolz D.B."/>
            <person name="Eagon P.K."/>
            <person name="Whitcomb D.C."/>
        </authorList>
    </citation>
    <scope>NUCLEOTIDE SEQUENCE [MRNA]</scope>
</reference>
<reference key="2">
    <citation type="journal article" date="2019" name="J. Biol. Chem.">
        <title>Lysine methylation by the mitochondrial methyltransferase FAM173B optimizes the function of mitochondrial ATP synthase.</title>
        <authorList>
            <person name="Malecki J.M."/>
            <person name="Willemen H.L.D.M."/>
            <person name="Pinto R."/>
            <person name="Ho A.Y.Y."/>
            <person name="Moen A."/>
            <person name="Kjoenstad I.F."/>
            <person name="Burgering B.M.T."/>
            <person name="Zwartkruis F."/>
            <person name="Eijkelkamp N."/>
            <person name="Falnes P.O."/>
        </authorList>
    </citation>
    <scope>METHYLATION AT LYS-110</scope>
</reference>
<proteinExistence type="evidence at protein level"/>
<gene>
    <name evidence="6" type="primary">Atp5mc3</name>
    <name type="synonym">Atp5g3</name>
</gene>
<keyword id="KW-0138">CF(0)</keyword>
<keyword id="KW-0375">Hydrogen ion transport</keyword>
<keyword id="KW-0406">Ion transport</keyword>
<keyword id="KW-0446">Lipid-binding</keyword>
<keyword id="KW-0472">Membrane</keyword>
<keyword id="KW-0488">Methylation</keyword>
<keyword id="KW-0496">Mitochondrion</keyword>
<keyword id="KW-1185">Reference proteome</keyword>
<keyword id="KW-0809">Transit peptide</keyword>
<keyword id="KW-0812">Transmembrane</keyword>
<keyword id="KW-1133">Transmembrane helix</keyword>
<keyword id="KW-0813">Transport</keyword>
<feature type="transit peptide" description="Mitochondrion" evidence="1">
    <location>
        <begin position="1"/>
        <end position="67"/>
    </location>
</feature>
<feature type="chain" id="PRO_0000002570" description="ATP synthase F(0) complex subunit C3, mitochondrial">
    <location>
        <begin position="68"/>
        <end position="142"/>
    </location>
</feature>
<feature type="transmembrane region" description="Helical" evidence="3">
    <location>
        <begin position="83"/>
        <end position="103"/>
    </location>
</feature>
<feature type="transmembrane region" description="Helical" evidence="3">
    <location>
        <begin position="118"/>
        <end position="138"/>
    </location>
</feature>
<feature type="site" description="Reversibly protonated during proton transport" evidence="1">
    <location>
        <position position="125"/>
    </location>
</feature>
<feature type="modified residue" description="N6,N6,N6-trimethyllysine" evidence="4">
    <location>
        <position position="110"/>
    </location>
</feature>
<protein>
    <recommendedName>
        <fullName evidence="5">ATP synthase F(0) complex subunit C3, mitochondrial</fullName>
    </recommendedName>
    <alternativeName>
        <fullName>ATP synthase lipid-binding protein</fullName>
    </alternativeName>
    <alternativeName>
        <fullName evidence="6">ATP synthase membrane subunit c locus 3</fullName>
    </alternativeName>
    <alternativeName>
        <fullName>ATP synthase proteolipid P3</fullName>
    </alternativeName>
    <alternativeName>
        <fullName>ATPase protein 9</fullName>
    </alternativeName>
    <alternativeName>
        <fullName>ATPase subunit c</fullName>
    </alternativeName>
</protein>
<comment type="function">
    <text>Mitochondrial membrane ATP synthase (F(1)F(0) ATP synthase or Complex V) produces ATP from ADP in the presence of a proton gradient across the membrane which is generated by electron transport complexes of the respiratory chain. F-type ATPases consist of two structural domains, F(1) - containing the extramembraneous catalytic core and F(0) - containing the membrane proton channel, linked together by a central stalk and a peripheral stalk. During catalysis, ATP synthesis in the catalytic domain of F(1) is coupled via a rotary mechanism of the central stalk subunits to proton translocation. Part of the complex F(0) domain. A homomeric c-ring of probably 10 subunits is part of the complex rotary element.</text>
</comment>
<comment type="subunit">
    <text evidence="2">F-type ATPases have 2 components, CF(1) - the catalytic core - and CF(0) - the membrane proton channel. CF(1) has five subunits: alpha(3), beta(3), gamma(1), delta(1), epsilon(1). CF(0) has three main subunits: a, b and c. Interacts with TMEM70 and TMEM242 (By similarity).</text>
</comment>
<comment type="subcellular location">
    <subcellularLocation>
        <location evidence="1">Mitochondrion membrane</location>
        <topology evidence="1">Multi-pass membrane protein</topology>
    </subcellularLocation>
</comment>
<comment type="PTM">
    <text evidence="4">Trimethylated by ATPSCKMT at Lys-110. Methylation is required for proper incorporation of the C subunit into the ATP synthase complex and mitochondrial respiration.</text>
</comment>
<comment type="disease">
    <text>This protein is the major protein stored in the storage bodies of animals or humans affected with ceroid lipofuscinosis (Batten disease).</text>
</comment>
<comment type="miscellaneous">
    <text evidence="5">There are three genes which encode the mitochondrial ATP synthase proteolipid and they specify precursors with different import sequences but identical mature proteins.</text>
</comment>
<comment type="similarity">
    <text evidence="5">Belongs to the ATPase C chain family.</text>
</comment>
<evidence type="ECO:0000250" key="1"/>
<evidence type="ECO:0000250" key="2">
    <source>
        <dbReference type="UniProtKB" id="P48201"/>
    </source>
</evidence>
<evidence type="ECO:0000255" key="3"/>
<evidence type="ECO:0000269" key="4">
    <source>
    </source>
</evidence>
<evidence type="ECO:0000305" key="5"/>
<evidence type="ECO:0000312" key="6">
    <source>
        <dbReference type="RGD" id="620052"/>
    </source>
</evidence>
<accession>Q71S46</accession>
<sequence length="142" mass="14693">MFACAKLACTPSLIRAGSRVAYRPISASVLSRPEASRTGEGSTVFNGAQNGVSQLIQREFQTSAISRDIDTAAKFIGAGAATVGVAGSGAGIGTVFGSLIIGYARNPSLKQQLFSYAILGFALSEAMGLFCLMVAFLILFAM</sequence>
<dbReference type="EMBL" id="AF315374">
    <property type="protein sequence ID" value="AAG60677.1"/>
    <property type="molecule type" value="mRNA"/>
</dbReference>
<dbReference type="RefSeq" id="NP_446208.1">
    <property type="nucleotide sequence ID" value="NM_053756.1"/>
</dbReference>
<dbReference type="SMR" id="Q71S46"/>
<dbReference type="CORUM" id="Q71S46"/>
<dbReference type="FunCoup" id="Q71S46">
    <property type="interactions" value="998"/>
</dbReference>
<dbReference type="STRING" id="10116.ENSRNOP00000055032"/>
<dbReference type="PhosphoSitePlus" id="Q71S46"/>
<dbReference type="jPOST" id="Q71S46"/>
<dbReference type="PaxDb" id="10116-ENSRNOP00000055032"/>
<dbReference type="UCSC" id="RGD:620052">
    <property type="organism name" value="rat"/>
</dbReference>
<dbReference type="AGR" id="RGD:620052"/>
<dbReference type="RGD" id="620052">
    <property type="gene designation" value="Atp5mc3"/>
</dbReference>
<dbReference type="eggNOG" id="KOG3025">
    <property type="taxonomic scope" value="Eukaryota"/>
</dbReference>
<dbReference type="InParanoid" id="Q71S46"/>
<dbReference type="PhylomeDB" id="Q71S46"/>
<dbReference type="Reactome" id="R-RNO-1268020">
    <property type="pathway name" value="Mitochondrial protein import"/>
</dbReference>
<dbReference type="Reactome" id="R-RNO-163210">
    <property type="pathway name" value="Formation of ATP by chemiosmotic coupling"/>
</dbReference>
<dbReference type="Reactome" id="R-RNO-8949613">
    <property type="pathway name" value="Cristae formation"/>
</dbReference>
<dbReference type="PRO" id="PR:Q71S46"/>
<dbReference type="Proteomes" id="UP000002494">
    <property type="component" value="Unplaced"/>
</dbReference>
<dbReference type="GO" id="GO:0034703">
    <property type="term" value="C:cation channel complex"/>
    <property type="evidence" value="ECO:0000314"/>
    <property type="project" value="RGD"/>
</dbReference>
<dbReference type="GO" id="GO:0031966">
    <property type="term" value="C:mitochondrial membrane"/>
    <property type="evidence" value="ECO:0007669"/>
    <property type="project" value="UniProtKB-SubCell"/>
</dbReference>
<dbReference type="GO" id="GO:0045259">
    <property type="term" value="C:proton-transporting ATP synthase complex"/>
    <property type="evidence" value="ECO:0007669"/>
    <property type="project" value="UniProtKB-KW"/>
</dbReference>
<dbReference type="GO" id="GO:0033177">
    <property type="term" value="C:proton-transporting two-sector ATPase complex, proton-transporting domain"/>
    <property type="evidence" value="ECO:0007669"/>
    <property type="project" value="InterPro"/>
</dbReference>
<dbReference type="GO" id="GO:0022834">
    <property type="term" value="F:ligand-gated channel activity"/>
    <property type="evidence" value="ECO:0000314"/>
    <property type="project" value="RGD"/>
</dbReference>
<dbReference type="GO" id="GO:0008289">
    <property type="term" value="F:lipid binding"/>
    <property type="evidence" value="ECO:0007669"/>
    <property type="project" value="UniProtKB-KW"/>
</dbReference>
<dbReference type="GO" id="GO:0015078">
    <property type="term" value="F:proton transmembrane transporter activity"/>
    <property type="evidence" value="ECO:0007669"/>
    <property type="project" value="InterPro"/>
</dbReference>
<dbReference type="GO" id="GO:0046931">
    <property type="term" value="P:pore complex assembly"/>
    <property type="evidence" value="ECO:0000314"/>
    <property type="project" value="RGD"/>
</dbReference>
<dbReference type="GO" id="GO:0015986">
    <property type="term" value="P:proton motive force-driven ATP synthesis"/>
    <property type="evidence" value="ECO:0000318"/>
    <property type="project" value="GO_Central"/>
</dbReference>
<dbReference type="GO" id="GO:0061959">
    <property type="term" value="P:response to (R)-carnitine"/>
    <property type="evidence" value="ECO:0000270"/>
    <property type="project" value="RGD"/>
</dbReference>
<dbReference type="GO" id="GO:0045471">
    <property type="term" value="P:response to ethanol"/>
    <property type="evidence" value="ECO:0000270"/>
    <property type="project" value="RGD"/>
</dbReference>
<dbReference type="GO" id="GO:0035994">
    <property type="term" value="P:response to muscle stretch"/>
    <property type="evidence" value="ECO:0000270"/>
    <property type="project" value="RGD"/>
</dbReference>
<dbReference type="CDD" id="cd18182">
    <property type="entry name" value="ATP-synt_Fo_c_ATP5G3"/>
    <property type="match status" value="1"/>
</dbReference>
<dbReference type="FunFam" id="1.20.20.10:FF:000003">
    <property type="entry name" value="Atp synthase f complex subunit mitochondrial"/>
    <property type="match status" value="1"/>
</dbReference>
<dbReference type="Gene3D" id="1.20.20.10">
    <property type="entry name" value="F1F0 ATP synthase subunit C"/>
    <property type="match status" value="1"/>
</dbReference>
<dbReference type="HAMAP" id="MF_01396">
    <property type="entry name" value="ATP_synth_c_bact"/>
    <property type="match status" value="1"/>
</dbReference>
<dbReference type="InterPro" id="IPR000454">
    <property type="entry name" value="ATP_synth_F0_csu"/>
</dbReference>
<dbReference type="InterPro" id="IPR020537">
    <property type="entry name" value="ATP_synth_F0_csu_DDCD_BS"/>
</dbReference>
<dbReference type="InterPro" id="IPR038662">
    <property type="entry name" value="ATP_synth_F0_csu_sf"/>
</dbReference>
<dbReference type="InterPro" id="IPR002379">
    <property type="entry name" value="ATPase_proteolipid_c-like_dom"/>
</dbReference>
<dbReference type="InterPro" id="IPR035921">
    <property type="entry name" value="F/V-ATP_Csub_sf"/>
</dbReference>
<dbReference type="PANTHER" id="PTHR10031">
    <property type="entry name" value="ATP SYNTHASE LIPID-BINDING PROTEIN, MITOCHONDRIAL"/>
    <property type="match status" value="1"/>
</dbReference>
<dbReference type="PANTHER" id="PTHR10031:SF0">
    <property type="entry name" value="ATPASE PROTEIN 9"/>
    <property type="match status" value="1"/>
</dbReference>
<dbReference type="Pfam" id="PF00137">
    <property type="entry name" value="ATP-synt_C"/>
    <property type="match status" value="1"/>
</dbReference>
<dbReference type="PRINTS" id="PR00124">
    <property type="entry name" value="ATPASEC"/>
</dbReference>
<dbReference type="SUPFAM" id="SSF81333">
    <property type="entry name" value="F1F0 ATP synthase subunit C"/>
    <property type="match status" value="1"/>
</dbReference>
<dbReference type="PROSITE" id="PS00605">
    <property type="entry name" value="ATPASE_C"/>
    <property type="match status" value="1"/>
</dbReference>
<organism>
    <name type="scientific">Rattus norvegicus</name>
    <name type="common">Rat</name>
    <dbReference type="NCBI Taxonomy" id="10116"/>
    <lineage>
        <taxon>Eukaryota</taxon>
        <taxon>Metazoa</taxon>
        <taxon>Chordata</taxon>
        <taxon>Craniata</taxon>
        <taxon>Vertebrata</taxon>
        <taxon>Euteleostomi</taxon>
        <taxon>Mammalia</taxon>
        <taxon>Eutheria</taxon>
        <taxon>Euarchontoglires</taxon>
        <taxon>Glires</taxon>
        <taxon>Rodentia</taxon>
        <taxon>Myomorpha</taxon>
        <taxon>Muroidea</taxon>
        <taxon>Muridae</taxon>
        <taxon>Murinae</taxon>
        <taxon>Rattus</taxon>
    </lineage>
</organism>